<evidence type="ECO:0000250" key="1"/>
<evidence type="ECO:0000255" key="2">
    <source>
        <dbReference type="PROSITE-ProRule" id="PRU01082"/>
    </source>
</evidence>
<evidence type="ECO:0000256" key="3">
    <source>
        <dbReference type="SAM" id="MobiDB-lite"/>
    </source>
</evidence>
<evidence type="ECO:0000305" key="4"/>
<gene>
    <name type="primary">stp</name>
    <name type="ordered locus">lin1935</name>
</gene>
<comment type="function">
    <text evidence="1">Protein phosphatase that dephosphorylates EF-Tu.</text>
</comment>
<comment type="catalytic activity">
    <reaction>
        <text>O-phospho-L-seryl-[protein] + H2O = L-seryl-[protein] + phosphate</text>
        <dbReference type="Rhea" id="RHEA:20629"/>
        <dbReference type="Rhea" id="RHEA-COMP:9863"/>
        <dbReference type="Rhea" id="RHEA-COMP:11604"/>
        <dbReference type="ChEBI" id="CHEBI:15377"/>
        <dbReference type="ChEBI" id="CHEBI:29999"/>
        <dbReference type="ChEBI" id="CHEBI:43474"/>
        <dbReference type="ChEBI" id="CHEBI:83421"/>
        <dbReference type="EC" id="3.1.3.16"/>
    </reaction>
</comment>
<comment type="catalytic activity">
    <reaction>
        <text>O-phospho-L-threonyl-[protein] + H2O = L-threonyl-[protein] + phosphate</text>
        <dbReference type="Rhea" id="RHEA:47004"/>
        <dbReference type="Rhea" id="RHEA-COMP:11060"/>
        <dbReference type="Rhea" id="RHEA-COMP:11605"/>
        <dbReference type="ChEBI" id="CHEBI:15377"/>
        <dbReference type="ChEBI" id="CHEBI:30013"/>
        <dbReference type="ChEBI" id="CHEBI:43474"/>
        <dbReference type="ChEBI" id="CHEBI:61977"/>
        <dbReference type="EC" id="3.1.3.16"/>
    </reaction>
</comment>
<comment type="cofactor">
    <cofactor evidence="1">
        <name>Mn(2+)</name>
        <dbReference type="ChEBI" id="CHEBI:29035"/>
    </cofactor>
    <text evidence="1">Binds 2 manganese ions per subunit.</text>
</comment>
<comment type="subcellular location">
    <subcellularLocation>
        <location>Cytoplasm</location>
    </subcellularLocation>
    <subcellularLocation>
        <location evidence="1">Membrane</location>
        <topology evidence="1">Peripheral membrane protein</topology>
    </subcellularLocation>
</comment>
<comment type="similarity">
    <text evidence="4">Belongs to the PP2C family.</text>
</comment>
<organism>
    <name type="scientific">Listeria innocua serovar 6a (strain ATCC BAA-680 / CLIP 11262)</name>
    <dbReference type="NCBI Taxonomy" id="272626"/>
    <lineage>
        <taxon>Bacteria</taxon>
        <taxon>Bacillati</taxon>
        <taxon>Bacillota</taxon>
        <taxon>Bacilli</taxon>
        <taxon>Bacillales</taxon>
        <taxon>Listeriaceae</taxon>
        <taxon>Listeria</taxon>
    </lineage>
</organism>
<sequence>MHAEFRTDRGRIRHHNEDNGGVFENKDKQPIVIVADGMGGHRAGDVASEMAVRLLSDAWKETTALLTAEEIETWLQKTIQEVNKEIVLYAESEMDLNGMGTTLVAAIMAQSQVVIANVGDSRGYLLQNDVMRQLTEDHSLVHELLRTGEISKEDAMNHPRKNILLRALGVEGKVEVDTFVVPFQTSDTLLLCSDGLTNMVPEAEMEEILKSKRTLSEKADVFITKANSYGGEDNITVLLVERNLMQKGRDAS</sequence>
<proteinExistence type="inferred from homology"/>
<keyword id="KW-0963">Cytoplasm</keyword>
<keyword id="KW-0378">Hydrolase</keyword>
<keyword id="KW-0464">Manganese</keyword>
<keyword id="KW-0472">Membrane</keyword>
<keyword id="KW-0479">Metal-binding</keyword>
<keyword id="KW-0904">Protein phosphatase</keyword>
<accession>Q92AI7</accession>
<protein>
    <recommendedName>
        <fullName>Serine/threonine phosphatase stp</fullName>
        <ecNumber>3.1.3.16</ecNumber>
    </recommendedName>
</protein>
<feature type="chain" id="PRO_0000363062" description="Serine/threonine phosphatase stp">
    <location>
        <begin position="1"/>
        <end position="252"/>
    </location>
</feature>
<feature type="domain" description="PPM-type phosphatase" evidence="2">
    <location>
        <begin position="2"/>
        <end position="242"/>
    </location>
</feature>
<feature type="region of interest" description="Disordered" evidence="3">
    <location>
        <begin position="1"/>
        <end position="22"/>
    </location>
</feature>
<feature type="binding site" evidence="1">
    <location>
        <position position="36"/>
    </location>
    <ligand>
        <name>Mn(2+)</name>
        <dbReference type="ChEBI" id="CHEBI:29035"/>
        <label>1</label>
    </ligand>
</feature>
<feature type="binding site" evidence="1">
    <location>
        <position position="36"/>
    </location>
    <ligand>
        <name>Mn(2+)</name>
        <dbReference type="ChEBI" id="CHEBI:29035"/>
        <label>2</label>
    </ligand>
</feature>
<feature type="binding site" evidence="1">
    <location>
        <position position="37"/>
    </location>
    <ligand>
        <name>Mn(2+)</name>
        <dbReference type="ChEBI" id="CHEBI:29035"/>
        <label>1</label>
    </ligand>
</feature>
<feature type="binding site" evidence="1">
    <location>
        <position position="194"/>
    </location>
    <ligand>
        <name>Mn(2+)</name>
        <dbReference type="ChEBI" id="CHEBI:29035"/>
        <label>2</label>
    </ligand>
</feature>
<feature type="binding site" evidence="1">
    <location>
        <position position="233"/>
    </location>
    <ligand>
        <name>Mn(2+)</name>
        <dbReference type="ChEBI" id="CHEBI:29035"/>
        <label>2</label>
    </ligand>
</feature>
<reference key="1">
    <citation type="journal article" date="2001" name="Science">
        <title>Comparative genomics of Listeria species.</title>
        <authorList>
            <person name="Glaser P."/>
            <person name="Frangeul L."/>
            <person name="Buchrieser C."/>
            <person name="Rusniok C."/>
            <person name="Amend A."/>
            <person name="Baquero F."/>
            <person name="Berche P."/>
            <person name="Bloecker H."/>
            <person name="Brandt P."/>
            <person name="Chakraborty T."/>
            <person name="Charbit A."/>
            <person name="Chetouani F."/>
            <person name="Couve E."/>
            <person name="de Daruvar A."/>
            <person name="Dehoux P."/>
            <person name="Domann E."/>
            <person name="Dominguez-Bernal G."/>
            <person name="Duchaud E."/>
            <person name="Durant L."/>
            <person name="Dussurget O."/>
            <person name="Entian K.-D."/>
            <person name="Fsihi H."/>
            <person name="Garcia-del Portillo F."/>
            <person name="Garrido P."/>
            <person name="Gautier L."/>
            <person name="Goebel W."/>
            <person name="Gomez-Lopez N."/>
            <person name="Hain T."/>
            <person name="Hauf J."/>
            <person name="Jackson D."/>
            <person name="Jones L.-M."/>
            <person name="Kaerst U."/>
            <person name="Kreft J."/>
            <person name="Kuhn M."/>
            <person name="Kunst F."/>
            <person name="Kurapkat G."/>
            <person name="Madueno E."/>
            <person name="Maitournam A."/>
            <person name="Mata Vicente J."/>
            <person name="Ng E."/>
            <person name="Nedjari H."/>
            <person name="Nordsiek G."/>
            <person name="Novella S."/>
            <person name="de Pablos B."/>
            <person name="Perez-Diaz J.-C."/>
            <person name="Purcell R."/>
            <person name="Remmel B."/>
            <person name="Rose M."/>
            <person name="Schlueter T."/>
            <person name="Simoes N."/>
            <person name="Tierrez A."/>
            <person name="Vazquez-Boland J.-A."/>
            <person name="Voss H."/>
            <person name="Wehland J."/>
            <person name="Cossart P."/>
        </authorList>
    </citation>
    <scope>NUCLEOTIDE SEQUENCE [LARGE SCALE GENOMIC DNA]</scope>
    <source>
        <strain>ATCC BAA-680 / CLIP 11262</strain>
    </source>
</reference>
<name>STP1_LISIN</name>
<dbReference type="EC" id="3.1.3.16"/>
<dbReference type="EMBL" id="AL596170">
    <property type="protein sequence ID" value="CAC97165.1"/>
    <property type="molecule type" value="Genomic_DNA"/>
</dbReference>
<dbReference type="PIR" id="AE1674">
    <property type="entry name" value="AE1674"/>
</dbReference>
<dbReference type="RefSeq" id="WP_003762934.1">
    <property type="nucleotide sequence ID" value="NC_003212.1"/>
</dbReference>
<dbReference type="SMR" id="Q92AI7"/>
<dbReference type="STRING" id="272626.gene:17566293"/>
<dbReference type="KEGG" id="lin:lin1935"/>
<dbReference type="eggNOG" id="COG0631">
    <property type="taxonomic scope" value="Bacteria"/>
</dbReference>
<dbReference type="HOGENOM" id="CLU_034545_4_1_9"/>
<dbReference type="OrthoDB" id="9801841at2"/>
<dbReference type="Proteomes" id="UP000002513">
    <property type="component" value="Chromosome"/>
</dbReference>
<dbReference type="GO" id="GO:0005737">
    <property type="term" value="C:cytoplasm"/>
    <property type="evidence" value="ECO:0007669"/>
    <property type="project" value="UniProtKB-SubCell"/>
</dbReference>
<dbReference type="GO" id="GO:0016020">
    <property type="term" value="C:membrane"/>
    <property type="evidence" value="ECO:0007669"/>
    <property type="project" value="UniProtKB-SubCell"/>
</dbReference>
<dbReference type="GO" id="GO:0046872">
    <property type="term" value="F:metal ion binding"/>
    <property type="evidence" value="ECO:0007669"/>
    <property type="project" value="UniProtKB-KW"/>
</dbReference>
<dbReference type="GO" id="GO:0004722">
    <property type="term" value="F:protein serine/threonine phosphatase activity"/>
    <property type="evidence" value="ECO:0007669"/>
    <property type="project" value="UniProtKB-EC"/>
</dbReference>
<dbReference type="CDD" id="cd00143">
    <property type="entry name" value="PP2Cc"/>
    <property type="match status" value="1"/>
</dbReference>
<dbReference type="FunFam" id="3.60.40.10:FF:000002">
    <property type="entry name" value="Serine/threonine phosphatase stp"/>
    <property type="match status" value="1"/>
</dbReference>
<dbReference type="Gene3D" id="3.60.40.10">
    <property type="entry name" value="PPM-type phosphatase domain"/>
    <property type="match status" value="1"/>
</dbReference>
<dbReference type="InterPro" id="IPR015655">
    <property type="entry name" value="PP2C"/>
</dbReference>
<dbReference type="InterPro" id="IPR036457">
    <property type="entry name" value="PPM-type-like_dom_sf"/>
</dbReference>
<dbReference type="InterPro" id="IPR001932">
    <property type="entry name" value="PPM-type_phosphatase-like_dom"/>
</dbReference>
<dbReference type="NCBIfam" id="NF033484">
    <property type="entry name" value="Stp1_PP2C_phos"/>
    <property type="match status" value="1"/>
</dbReference>
<dbReference type="PANTHER" id="PTHR47992">
    <property type="entry name" value="PROTEIN PHOSPHATASE"/>
    <property type="match status" value="1"/>
</dbReference>
<dbReference type="Pfam" id="PF13672">
    <property type="entry name" value="PP2C_2"/>
    <property type="match status" value="1"/>
</dbReference>
<dbReference type="SMART" id="SM00331">
    <property type="entry name" value="PP2C_SIG"/>
    <property type="match status" value="1"/>
</dbReference>
<dbReference type="SMART" id="SM00332">
    <property type="entry name" value="PP2Cc"/>
    <property type="match status" value="1"/>
</dbReference>
<dbReference type="SUPFAM" id="SSF81606">
    <property type="entry name" value="PP2C-like"/>
    <property type="match status" value="1"/>
</dbReference>
<dbReference type="PROSITE" id="PS51746">
    <property type="entry name" value="PPM_2"/>
    <property type="match status" value="1"/>
</dbReference>